<protein>
    <recommendedName>
        <fullName evidence="1">DNA-directed RNA polymerase subunit beta'</fullName>
        <ecNumber evidence="1">2.7.7.6</ecNumber>
    </recommendedName>
    <alternativeName>
        <fullName evidence="1">PEP</fullName>
    </alternativeName>
    <alternativeName>
        <fullName evidence="1">Plastid-encoded RNA polymerase subunit beta'</fullName>
        <shortName evidence="1">RNA polymerase subunit beta'</shortName>
    </alternativeName>
</protein>
<evidence type="ECO:0000255" key="1">
    <source>
        <dbReference type="HAMAP-Rule" id="MF_01323"/>
    </source>
</evidence>
<feature type="chain" id="PRO_0000225781" description="DNA-directed RNA polymerase subunit beta'">
    <location>
        <begin position="1"/>
        <end position="682"/>
    </location>
</feature>
<feature type="binding site" evidence="1">
    <location>
        <position position="69"/>
    </location>
    <ligand>
        <name>Zn(2+)</name>
        <dbReference type="ChEBI" id="CHEBI:29105"/>
    </ligand>
</feature>
<feature type="binding site" evidence="1">
    <location>
        <position position="71"/>
    </location>
    <ligand>
        <name>Zn(2+)</name>
        <dbReference type="ChEBI" id="CHEBI:29105"/>
    </ligand>
</feature>
<feature type="binding site" evidence="1">
    <location>
        <position position="87"/>
    </location>
    <ligand>
        <name>Zn(2+)</name>
        <dbReference type="ChEBI" id="CHEBI:29105"/>
    </ligand>
</feature>
<feature type="binding site" evidence="1">
    <location>
        <position position="90"/>
    </location>
    <ligand>
        <name>Zn(2+)</name>
        <dbReference type="ChEBI" id="CHEBI:29105"/>
    </ligand>
</feature>
<feature type="binding site" evidence="1">
    <location>
        <position position="489"/>
    </location>
    <ligand>
        <name>Mg(2+)</name>
        <dbReference type="ChEBI" id="CHEBI:18420"/>
    </ligand>
</feature>
<feature type="binding site" evidence="1">
    <location>
        <position position="491"/>
    </location>
    <ligand>
        <name>Mg(2+)</name>
        <dbReference type="ChEBI" id="CHEBI:18420"/>
    </ligand>
</feature>
<feature type="binding site" evidence="1">
    <location>
        <position position="493"/>
    </location>
    <ligand>
        <name>Mg(2+)</name>
        <dbReference type="ChEBI" id="CHEBI:18420"/>
    </ligand>
</feature>
<name>RPOC1_ACOCL</name>
<organism>
    <name type="scientific">Acorus calamus</name>
    <name type="common">Sweet flag</name>
    <dbReference type="NCBI Taxonomy" id="4465"/>
    <lineage>
        <taxon>Eukaryota</taxon>
        <taxon>Viridiplantae</taxon>
        <taxon>Streptophyta</taxon>
        <taxon>Embryophyta</taxon>
        <taxon>Tracheophyta</taxon>
        <taxon>Spermatophyta</taxon>
        <taxon>Magnoliopsida</taxon>
        <taxon>Liliopsida</taxon>
        <taxon>Acoraceae</taxon>
        <taxon>Acorus</taxon>
    </lineage>
</organism>
<comment type="function">
    <text evidence="1">DNA-dependent RNA polymerase catalyzes the transcription of DNA into RNA using the four ribonucleoside triphosphates as substrates.</text>
</comment>
<comment type="catalytic activity">
    <reaction evidence="1">
        <text>RNA(n) + a ribonucleoside 5'-triphosphate = RNA(n+1) + diphosphate</text>
        <dbReference type="Rhea" id="RHEA:21248"/>
        <dbReference type="Rhea" id="RHEA-COMP:14527"/>
        <dbReference type="Rhea" id="RHEA-COMP:17342"/>
        <dbReference type="ChEBI" id="CHEBI:33019"/>
        <dbReference type="ChEBI" id="CHEBI:61557"/>
        <dbReference type="ChEBI" id="CHEBI:140395"/>
        <dbReference type="EC" id="2.7.7.6"/>
    </reaction>
</comment>
<comment type="cofactor">
    <cofactor evidence="1">
        <name>Mg(2+)</name>
        <dbReference type="ChEBI" id="CHEBI:18420"/>
    </cofactor>
    <text evidence="1">Binds 1 Mg(2+) ion per subunit.</text>
</comment>
<comment type="cofactor">
    <cofactor evidence="1">
        <name>Zn(2+)</name>
        <dbReference type="ChEBI" id="CHEBI:29105"/>
    </cofactor>
    <text evidence="1">Binds 1 Zn(2+) ion per subunit.</text>
</comment>
<comment type="subunit">
    <text evidence="1">In plastids the minimal PEP RNA polymerase catalytic core is composed of four subunits: alpha, beta, beta', and beta''. When a (nuclear-encoded) sigma factor is associated with the core the holoenzyme is formed, which can initiate transcription.</text>
</comment>
<comment type="subcellular location">
    <subcellularLocation>
        <location evidence="1">Plastid</location>
        <location evidence="1">Chloroplast</location>
    </subcellularLocation>
</comment>
<comment type="similarity">
    <text evidence="1">Belongs to the RNA polymerase beta' chain family. RpoC1 subfamily.</text>
</comment>
<accession>Q3V543</accession>
<gene>
    <name evidence="1" type="primary">rpoC1</name>
</gene>
<reference key="1">
    <citation type="journal article" date="2005" name="Mol. Biol. Evol.">
        <title>Analysis of Acorus calamus chloroplast genome and its phylogenetic implications.</title>
        <authorList>
            <person name="Goremykin V.V."/>
            <person name="Holland B."/>
            <person name="Hirsch-Ernst K.I."/>
            <person name="Hellwig F.H."/>
        </authorList>
    </citation>
    <scope>NUCLEOTIDE SEQUENCE [LARGE SCALE GENOMIC DNA]</scope>
</reference>
<dbReference type="EC" id="2.7.7.6" evidence="1"/>
<dbReference type="EMBL" id="AJ879453">
    <property type="protein sequence ID" value="CAI53785.1"/>
    <property type="molecule type" value="Genomic_DNA"/>
</dbReference>
<dbReference type="RefSeq" id="YP_319756.1">
    <property type="nucleotide sequence ID" value="NC_007407.1"/>
</dbReference>
<dbReference type="SMR" id="Q3V543"/>
<dbReference type="GeneID" id="3677451"/>
<dbReference type="GO" id="GO:0009507">
    <property type="term" value="C:chloroplast"/>
    <property type="evidence" value="ECO:0007669"/>
    <property type="project" value="UniProtKB-SubCell"/>
</dbReference>
<dbReference type="GO" id="GO:0000428">
    <property type="term" value="C:DNA-directed RNA polymerase complex"/>
    <property type="evidence" value="ECO:0007669"/>
    <property type="project" value="UniProtKB-KW"/>
</dbReference>
<dbReference type="GO" id="GO:0005739">
    <property type="term" value="C:mitochondrion"/>
    <property type="evidence" value="ECO:0007669"/>
    <property type="project" value="GOC"/>
</dbReference>
<dbReference type="GO" id="GO:0003677">
    <property type="term" value="F:DNA binding"/>
    <property type="evidence" value="ECO:0007669"/>
    <property type="project" value="UniProtKB-UniRule"/>
</dbReference>
<dbReference type="GO" id="GO:0003899">
    <property type="term" value="F:DNA-directed RNA polymerase activity"/>
    <property type="evidence" value="ECO:0007669"/>
    <property type="project" value="UniProtKB-UniRule"/>
</dbReference>
<dbReference type="GO" id="GO:0000287">
    <property type="term" value="F:magnesium ion binding"/>
    <property type="evidence" value="ECO:0007669"/>
    <property type="project" value="UniProtKB-UniRule"/>
</dbReference>
<dbReference type="GO" id="GO:0008270">
    <property type="term" value="F:zinc ion binding"/>
    <property type="evidence" value="ECO:0007669"/>
    <property type="project" value="UniProtKB-UniRule"/>
</dbReference>
<dbReference type="GO" id="GO:0006351">
    <property type="term" value="P:DNA-templated transcription"/>
    <property type="evidence" value="ECO:0007669"/>
    <property type="project" value="UniProtKB-UniRule"/>
</dbReference>
<dbReference type="FunFam" id="1.10.40.90:FF:000002">
    <property type="entry name" value="DNA-directed RNA polymerase subunit"/>
    <property type="match status" value="1"/>
</dbReference>
<dbReference type="FunFam" id="4.10.860.120:FF:000007">
    <property type="entry name" value="DNA-directed RNA polymerase subunit gamma"/>
    <property type="match status" value="1"/>
</dbReference>
<dbReference type="Gene3D" id="1.10.40.90">
    <property type="match status" value="1"/>
</dbReference>
<dbReference type="Gene3D" id="2.40.40.20">
    <property type="match status" value="1"/>
</dbReference>
<dbReference type="Gene3D" id="4.10.860.120">
    <property type="entry name" value="RNA polymerase II, clamp domain"/>
    <property type="match status" value="1"/>
</dbReference>
<dbReference type="Gene3D" id="1.10.274.100">
    <property type="entry name" value="RNA polymerase Rpb1, domain 3"/>
    <property type="match status" value="1"/>
</dbReference>
<dbReference type="HAMAP" id="MF_01323">
    <property type="entry name" value="RNApol_bact_RpoC1"/>
    <property type="match status" value="1"/>
</dbReference>
<dbReference type="InterPro" id="IPR045867">
    <property type="entry name" value="DNA-dir_RpoC_beta_prime"/>
</dbReference>
<dbReference type="InterPro" id="IPR000722">
    <property type="entry name" value="RNA_pol_asu"/>
</dbReference>
<dbReference type="InterPro" id="IPR006592">
    <property type="entry name" value="RNA_pol_N"/>
</dbReference>
<dbReference type="InterPro" id="IPR007080">
    <property type="entry name" value="RNA_pol_Rpb1_1"/>
</dbReference>
<dbReference type="InterPro" id="IPR042102">
    <property type="entry name" value="RNA_pol_Rpb1_3_sf"/>
</dbReference>
<dbReference type="InterPro" id="IPR044893">
    <property type="entry name" value="RNA_pol_Rpb1_clamp_domain"/>
</dbReference>
<dbReference type="InterPro" id="IPR034678">
    <property type="entry name" value="RNApol_RpoC1"/>
</dbReference>
<dbReference type="PANTHER" id="PTHR19376">
    <property type="entry name" value="DNA-DIRECTED RNA POLYMERASE"/>
    <property type="match status" value="1"/>
</dbReference>
<dbReference type="PANTHER" id="PTHR19376:SF54">
    <property type="entry name" value="DNA-DIRECTED RNA POLYMERASE SUBUNIT BETA"/>
    <property type="match status" value="1"/>
</dbReference>
<dbReference type="Pfam" id="PF04997">
    <property type="entry name" value="RNA_pol_Rpb1_1"/>
    <property type="match status" value="1"/>
</dbReference>
<dbReference type="Pfam" id="PF00623">
    <property type="entry name" value="RNA_pol_Rpb1_2"/>
    <property type="match status" value="1"/>
</dbReference>
<dbReference type="SMART" id="SM00663">
    <property type="entry name" value="RPOLA_N"/>
    <property type="match status" value="1"/>
</dbReference>
<dbReference type="SUPFAM" id="SSF64484">
    <property type="entry name" value="beta and beta-prime subunits of DNA dependent RNA-polymerase"/>
    <property type="match status" value="1"/>
</dbReference>
<sequence length="682" mass="78493">MIDRYKHQQLQIGSVSPQQISAWANKILPNGEIVGEVTKPYTFHYKTNKPEKDGLFCERIFGPIKSGICACGNYRVIGAEKEDPKFCEQCGVEFIDSRIRRYQMGYIKLACPVTHVWYLKRLPSYIANLLDKPLKELEGLVYCDFSFARPIAKKPTFLRLRGLFEYEIQSWKYSIPLFFTTQGFDTFRNREISTGAGAIREQLADLDLRIVIDNSSVEWKDLGDEGSTGNEWEDRKIGRRKDFLVRRMELAKHFIRTNVEPERMVLCLLPVLPPELRPIIQIDGGKLMSSDINELYRRVIYRNNTLTDLLKTSRSTPGELVMCQEKLVQEAVDTLLDNGIRGQPMRDGHNKVYKSFSDVIEGKEGRFRETLLGKRVDYSGRSVIVVGPSLSLHRCGLPREIAIELFQTFVIRGLIRQHLASNIGIAKSKIREKEPIVWEILQEVMQGHPVLLNRAPTLHRLGIQAFQPVLVEGRAICLHPLVCKGFNADFDGDQMAVHVPLSLEAQAEARLLMFSHMNLLSPAIGDPISVPTQDMLIGLYVLTMGNRRGIFVNRYNPCNRRNYQNKTVDNNNYKHTKEKKPYFLSSYDALGAYQQKRINLHSPLWLRWRLDQRVIGSREVPIEVQYESLGTYQEIYGHYLIVRSVKKEILCIYIRTTVGHISFYREIEESVQGFCRAYSYGT</sequence>
<geneLocation type="chloroplast"/>
<proteinExistence type="inferred from homology"/>
<keyword id="KW-0150">Chloroplast</keyword>
<keyword id="KW-0240">DNA-directed RNA polymerase</keyword>
<keyword id="KW-0460">Magnesium</keyword>
<keyword id="KW-0479">Metal-binding</keyword>
<keyword id="KW-0548">Nucleotidyltransferase</keyword>
<keyword id="KW-0934">Plastid</keyword>
<keyword id="KW-0804">Transcription</keyword>
<keyword id="KW-0808">Transferase</keyword>
<keyword id="KW-0862">Zinc</keyword>